<accession>Q21997</accession>
<accession>Q9UA08</accession>
<feature type="chain" id="PRO_0000219051" description="Derlin-2">
    <location>
        <begin position="1"/>
        <end position="237"/>
    </location>
</feature>
<feature type="topological domain" description="Cytoplasmic" evidence="2">
    <location>
        <begin position="1"/>
        <end position="20"/>
    </location>
</feature>
<feature type="transmembrane region" description="Helical; Name=1" evidence="2">
    <location>
        <begin position="21"/>
        <end position="41"/>
    </location>
</feature>
<feature type="topological domain" description="Lumenal" evidence="2">
    <location>
        <begin position="42"/>
        <end position="54"/>
    </location>
</feature>
<feature type="transmembrane region" description="Helical; Name=2" evidence="2">
    <location>
        <begin position="55"/>
        <end position="75"/>
    </location>
</feature>
<feature type="topological domain" description="Cytoplasmic" evidence="2">
    <location>
        <begin position="76"/>
        <end position="97"/>
    </location>
</feature>
<feature type="transmembrane region" description="Helical; Name=3" evidence="2">
    <location>
        <begin position="98"/>
        <end position="118"/>
    </location>
</feature>
<feature type="topological domain" description="Lumenal" evidence="2">
    <location>
        <begin position="119"/>
        <end position="166"/>
    </location>
</feature>
<feature type="transmembrane region" description="Helical; Name=4" evidence="2">
    <location>
        <begin position="167"/>
        <end position="187"/>
    </location>
</feature>
<feature type="topological domain" description="Cytoplasmic" evidence="2">
    <location>
        <begin position="188"/>
        <end position="237"/>
    </location>
</feature>
<feature type="region of interest" description="Disordered" evidence="3">
    <location>
        <begin position="212"/>
        <end position="237"/>
    </location>
</feature>
<feature type="compositionally biased region" description="Basic and acidic residues" evidence="3">
    <location>
        <begin position="212"/>
        <end position="222"/>
    </location>
</feature>
<feature type="compositionally biased region" description="Acidic residues" evidence="3">
    <location>
        <begin position="226"/>
        <end position="237"/>
    </location>
</feature>
<proteinExistence type="evidence at transcript level"/>
<keyword id="KW-0256">Endoplasmic reticulum</keyword>
<keyword id="KW-0472">Membrane</keyword>
<keyword id="KW-0653">Protein transport</keyword>
<keyword id="KW-1185">Reference proteome</keyword>
<keyword id="KW-0346">Stress response</keyword>
<keyword id="KW-0812">Transmembrane</keyword>
<keyword id="KW-1133">Transmembrane helix</keyword>
<keyword id="KW-0813">Transport</keyword>
<comment type="function">
    <text evidence="4 5">May be required for the degradation process of some specific misfolded endoplasmic reticulum (ER) luminal proteins. Participates in the transfer of misfolded proteins from the ER to the cytosol, where they are destroyed by the proteasome in a ubiquitin-dependent manner. Its precise function remains unclear, but its ability to complement der1 mutations in C.cerevisiae, suggests a similar function in the degradation of ER misfolded proteins.</text>
</comment>
<comment type="subcellular location">
    <subcellularLocation>
        <location evidence="1">Endoplasmic reticulum membrane</location>
        <topology evidence="1">Multi-pass membrane protein</topology>
    </subcellularLocation>
</comment>
<comment type="induction">
    <text evidence="5">By endoplasmic reticulum stress.</text>
</comment>
<comment type="similarity">
    <text evidence="7">Belongs to the derlin family.</text>
</comment>
<protein>
    <recommendedName>
        <fullName evidence="7">Derlin-2</fullName>
    </recommendedName>
    <alternativeName>
        <fullName>DER1-like protein 2</fullName>
    </alternativeName>
    <alternativeName>
        <fullName evidence="6">cDerlin-2</fullName>
    </alternativeName>
</protein>
<reference key="1">
    <citation type="journal article" date="1999" name="Nucleic Acids Res.">
        <title>Caenorhabditis elegans mRNAs that encode a protein similar to ADARs derive from an operon containing six genes.</title>
        <authorList>
            <person name="Hough R.F."/>
            <person name="Lingam A.T."/>
            <person name="Bass B.L."/>
        </authorList>
    </citation>
    <scope>NUCLEOTIDE SEQUENCE [MRNA]</scope>
    <source>
        <strain>Bristol N2</strain>
    </source>
</reference>
<reference key="2">
    <citation type="journal article" date="1998" name="Science">
        <title>Genome sequence of the nematode C. elegans: a platform for investigating biology.</title>
        <authorList>
            <consortium name="The C. elegans sequencing consortium"/>
        </authorList>
    </citation>
    <scope>NUCLEOTIDE SEQUENCE [LARGE SCALE GENOMIC DNA]</scope>
    <source>
        <strain>Bristol N2</strain>
    </source>
</reference>
<reference key="3">
    <citation type="journal article" date="2004" name="FEMS Yeast Res.">
        <title>Der1p, a protein required for degradation of malfolded soluble proteins of the endoplasmic reticulum: topology and Der1-like proteins.</title>
        <authorList>
            <person name="Hitt R."/>
            <person name="Wolf D.H."/>
        </authorList>
    </citation>
    <scope>FUNCTION</scope>
</reference>
<reference key="4">
    <citation type="journal article" date="2004" name="Nature">
        <title>A membrane protein complex mediates retro-translocation from the ER lumen into the cytosol.</title>
        <authorList>
            <person name="Ye Y."/>
            <person name="Shibata Y."/>
            <person name="Yun C."/>
            <person name="Ron D."/>
            <person name="Rapoport T.A."/>
        </authorList>
    </citation>
    <scope>FUNCTION</scope>
    <scope>INDUCTION</scope>
</reference>
<evidence type="ECO:0000250" key="1">
    <source>
        <dbReference type="UniProtKB" id="Q9GZP9"/>
    </source>
</evidence>
<evidence type="ECO:0000255" key="2"/>
<evidence type="ECO:0000256" key="3">
    <source>
        <dbReference type="SAM" id="MobiDB-lite"/>
    </source>
</evidence>
<evidence type="ECO:0000269" key="4">
    <source>
    </source>
</evidence>
<evidence type="ECO:0000269" key="5">
    <source>
    </source>
</evidence>
<evidence type="ECO:0000303" key="6">
    <source>
    </source>
</evidence>
<evidence type="ECO:0000305" key="7"/>
<evidence type="ECO:0000312" key="8">
    <source>
        <dbReference type="WormBase" id="R151.6"/>
    </source>
</evidence>
<name>DERL2_CAEEL</name>
<gene>
    <name evidence="8" type="primary">der-2</name>
    <name evidence="8" type="ORF">R151.6</name>
</gene>
<organism>
    <name type="scientific">Caenorhabditis elegans</name>
    <dbReference type="NCBI Taxonomy" id="6239"/>
    <lineage>
        <taxon>Eukaryota</taxon>
        <taxon>Metazoa</taxon>
        <taxon>Ecdysozoa</taxon>
        <taxon>Nematoda</taxon>
        <taxon>Chromadorea</taxon>
        <taxon>Rhabditida</taxon>
        <taxon>Rhabditina</taxon>
        <taxon>Rhabditomorpha</taxon>
        <taxon>Rhabditoidea</taxon>
        <taxon>Rhabditidae</taxon>
        <taxon>Peloderinae</taxon>
        <taxon>Caenorhabditis</taxon>
    </lineage>
</organism>
<dbReference type="EMBL" id="AF143152">
    <property type="protein sequence ID" value="AAD37863.1"/>
    <property type="molecule type" value="mRNA"/>
</dbReference>
<dbReference type="EMBL" id="FO081317">
    <property type="protein sequence ID" value="CCD70760.1"/>
    <property type="molecule type" value="Genomic_DNA"/>
</dbReference>
<dbReference type="PIR" id="T16766">
    <property type="entry name" value="T16766"/>
</dbReference>
<dbReference type="RefSeq" id="NP_498590.4">
    <property type="nucleotide sequence ID" value="NM_066189.5"/>
</dbReference>
<dbReference type="SMR" id="Q21997"/>
<dbReference type="BioGRID" id="41230">
    <property type="interactions" value="5"/>
</dbReference>
<dbReference type="DIP" id="DIP-26928N"/>
<dbReference type="FunCoup" id="Q21997">
    <property type="interactions" value="2354"/>
</dbReference>
<dbReference type="STRING" id="6239.R151.6.1"/>
<dbReference type="PaxDb" id="6239-R151.6"/>
<dbReference type="PeptideAtlas" id="Q21997"/>
<dbReference type="EnsemblMetazoa" id="R151.6.1">
    <property type="protein sequence ID" value="R151.6.1"/>
    <property type="gene ID" value="WBGene00020109"/>
</dbReference>
<dbReference type="UCSC" id="R151.6">
    <property type="organism name" value="c. elegans"/>
</dbReference>
<dbReference type="AGR" id="WB:WBGene00020109"/>
<dbReference type="WormBase" id="R151.6">
    <property type="protein sequence ID" value="CE39620"/>
    <property type="gene ID" value="WBGene00020109"/>
    <property type="gene designation" value="der-2"/>
</dbReference>
<dbReference type="eggNOG" id="KOG0858">
    <property type="taxonomic scope" value="Eukaryota"/>
</dbReference>
<dbReference type="GeneTree" id="ENSGT00530000063156"/>
<dbReference type="HOGENOM" id="CLU_051898_5_2_1"/>
<dbReference type="InParanoid" id="Q21997"/>
<dbReference type="OMA" id="FKSQYWR"/>
<dbReference type="OrthoDB" id="1716531at2759"/>
<dbReference type="PhylomeDB" id="Q21997"/>
<dbReference type="Reactome" id="R-CEL-382556">
    <property type="pathway name" value="ABC-family proteins mediated transport"/>
</dbReference>
<dbReference type="Reactome" id="R-CEL-5358346">
    <property type="pathway name" value="Hedgehog ligand biogenesis"/>
</dbReference>
<dbReference type="PRO" id="PR:Q21997"/>
<dbReference type="Proteomes" id="UP000001940">
    <property type="component" value="Chromosome III"/>
</dbReference>
<dbReference type="Bgee" id="WBGene00020109">
    <property type="expression patterns" value="Expressed in germ line (C elegans) and 4 other cell types or tissues"/>
</dbReference>
<dbReference type="GO" id="GO:0005789">
    <property type="term" value="C:endoplasmic reticulum membrane"/>
    <property type="evidence" value="ECO:0000250"/>
    <property type="project" value="UniProtKB"/>
</dbReference>
<dbReference type="GO" id="GO:0005047">
    <property type="term" value="F:signal recognition particle binding"/>
    <property type="evidence" value="ECO:0000250"/>
    <property type="project" value="UniProtKB"/>
</dbReference>
<dbReference type="GO" id="GO:0030968">
    <property type="term" value="P:endoplasmic reticulum unfolded protein response"/>
    <property type="evidence" value="ECO:0000250"/>
    <property type="project" value="UniProtKB"/>
</dbReference>
<dbReference type="GO" id="GO:0036503">
    <property type="term" value="P:ERAD pathway"/>
    <property type="evidence" value="ECO:0000250"/>
    <property type="project" value="UniProtKB"/>
</dbReference>
<dbReference type="GO" id="GO:0036498">
    <property type="term" value="P:IRE1-mediated unfolded protein response"/>
    <property type="evidence" value="ECO:0007007"/>
    <property type="project" value="WormBase"/>
</dbReference>
<dbReference type="GO" id="GO:0030307">
    <property type="term" value="P:positive regulation of cell growth"/>
    <property type="evidence" value="ECO:0000250"/>
    <property type="project" value="UniProtKB"/>
</dbReference>
<dbReference type="GO" id="GO:0008284">
    <property type="term" value="P:positive regulation of cell population proliferation"/>
    <property type="evidence" value="ECO:0000250"/>
    <property type="project" value="UniProtKB"/>
</dbReference>
<dbReference type="GO" id="GO:0030970">
    <property type="term" value="P:retrograde protein transport, ER to cytosol"/>
    <property type="evidence" value="ECO:0000250"/>
    <property type="project" value="UniProtKB"/>
</dbReference>
<dbReference type="FunFam" id="1.20.1540.10:FF:000016">
    <property type="entry name" value="Derlin"/>
    <property type="match status" value="1"/>
</dbReference>
<dbReference type="InterPro" id="IPR007599">
    <property type="entry name" value="DER1"/>
</dbReference>
<dbReference type="InterPro" id="IPR035952">
    <property type="entry name" value="Rhomboid-like_sf"/>
</dbReference>
<dbReference type="PANTHER" id="PTHR11009">
    <property type="entry name" value="DER1-LIKE PROTEIN, DERLIN"/>
    <property type="match status" value="1"/>
</dbReference>
<dbReference type="Pfam" id="PF04511">
    <property type="entry name" value="DER1"/>
    <property type="match status" value="1"/>
</dbReference>
<dbReference type="SUPFAM" id="SSF144091">
    <property type="entry name" value="Rhomboid-like"/>
    <property type="match status" value="1"/>
</dbReference>
<sequence>MNGVVAALEEMPPVTRFYTGACVLLTTAVHLEFVTPFHLYFNWELIIRKYQFWRLITSFCFFGSFGFSFLFNMIFTYRYCMMLEEGSFRGRRADFVYMFLFGAVLMILSGIFVQILFLGQAFTIMLVYIWSRRNPMIQMNFFGVLTFTAPYLPWVLLLFSLLLGNNAVVDFMGIACGHIYFFLEDVFPFQEHGKRFLKTPQWLVYLFDERRPEPLPEDERPGGFEWGDEQPEQEQHD</sequence>